<dbReference type="EMBL" id="AK020041">
    <property type="protein sequence ID" value="BAB31977.1"/>
    <property type="molecule type" value="mRNA"/>
</dbReference>
<dbReference type="EMBL" id="AK034046">
    <property type="protein sequence ID" value="BAC28559.1"/>
    <property type="molecule type" value="mRNA"/>
</dbReference>
<dbReference type="EMBL" id="AK039867">
    <property type="protein sequence ID" value="BAC30468.1"/>
    <property type="molecule type" value="mRNA"/>
</dbReference>
<dbReference type="EMBL" id="AK040379">
    <property type="protein sequence ID" value="BAC30577.1"/>
    <property type="molecule type" value="mRNA"/>
</dbReference>
<dbReference type="EMBL" id="AK052562">
    <property type="protein sequence ID" value="BAC35040.1"/>
    <property type="molecule type" value="mRNA"/>
</dbReference>
<dbReference type="EMBL" id="AL845266">
    <property type="status" value="NOT_ANNOTATED_CDS"/>
    <property type="molecule type" value="Genomic_DNA"/>
</dbReference>
<dbReference type="CCDS" id="CCDS38086.1">
    <molecule id="Q8BG21-1"/>
</dbReference>
<dbReference type="CCDS" id="CCDS57160.1">
    <molecule id="Q8BG21-2"/>
</dbReference>
<dbReference type="CCDS" id="CCDS57161.1">
    <molecule id="Q8BG21-3"/>
</dbReference>
<dbReference type="RefSeq" id="NP_001230168.1">
    <molecule id="Q8BG21-2"/>
    <property type="nucleotide sequence ID" value="NM_001243239.1"/>
</dbReference>
<dbReference type="RefSeq" id="NP_001230169.1">
    <molecule id="Q8BG21-3"/>
    <property type="nucleotide sequence ID" value="NM_001243240.1"/>
</dbReference>
<dbReference type="RefSeq" id="NP_084138.1">
    <molecule id="Q8BG21-1"/>
    <property type="nucleotide sequence ID" value="NM_029862.4"/>
</dbReference>
<dbReference type="FunCoup" id="Q8BG21">
    <property type="interactions" value="51"/>
</dbReference>
<dbReference type="STRING" id="10090.ENSMUSP00000109640"/>
<dbReference type="PhosphoSitePlus" id="Q8BG21"/>
<dbReference type="SwissPalm" id="Q8BG21"/>
<dbReference type="PaxDb" id="10090-ENSMUSP00000109639"/>
<dbReference type="ProteomicsDB" id="272999">
    <molecule id="Q8BG21-1"/>
</dbReference>
<dbReference type="ProteomicsDB" id="353526"/>
<dbReference type="Pumba" id="Q8BG21"/>
<dbReference type="Antibodypedia" id="3031">
    <property type="antibodies" value="92 antibodies from 16 providers"/>
</dbReference>
<dbReference type="Ensembl" id="ENSMUST00000114003.2">
    <molecule id="Q8BG21-4"/>
    <property type="protein sequence ID" value="ENSMUSP00000109636.2"/>
    <property type="gene ID" value="ENSMUSG00000015488.15"/>
</dbReference>
<dbReference type="Ensembl" id="ENSMUST00000114004.8">
    <molecule id="Q8BG21-3"/>
    <property type="protein sequence ID" value="ENSMUSP00000109637.2"/>
    <property type="gene ID" value="ENSMUSG00000015488.15"/>
</dbReference>
<dbReference type="Ensembl" id="ENSMUST00000114005.9">
    <molecule id="Q8BG21-2"/>
    <property type="protein sequence ID" value="ENSMUSP00000109638.3"/>
    <property type="gene ID" value="ENSMUSG00000015488.15"/>
</dbReference>
<dbReference type="Ensembl" id="ENSMUST00000114006.8">
    <molecule id="Q8BG21-1"/>
    <property type="protein sequence ID" value="ENSMUSP00000109639.2"/>
    <property type="gene ID" value="ENSMUSG00000015488.15"/>
</dbReference>
<dbReference type="Ensembl" id="ENSMUST00000114007.8">
    <molecule id="Q8BG21-1"/>
    <property type="protein sequence ID" value="ENSMUSP00000109640.2"/>
    <property type="gene ID" value="ENSMUSG00000015488.15"/>
</dbReference>
<dbReference type="GeneID" id="381356"/>
<dbReference type="KEGG" id="mmu:381356"/>
<dbReference type="UCSC" id="uc008iwq.2">
    <molecule id="Q8BG21-2"/>
    <property type="organism name" value="mouse"/>
</dbReference>
<dbReference type="UCSC" id="uc008iws.2">
    <molecule id="Q8BG21-1"/>
    <property type="organism name" value="mouse"/>
</dbReference>
<dbReference type="AGR" id="MGI:1924317"/>
<dbReference type="CTD" id="11094"/>
<dbReference type="MGI" id="MGI:1924317">
    <property type="gene designation" value="Cacfd1"/>
</dbReference>
<dbReference type="VEuPathDB" id="HostDB:ENSMUSG00000015488"/>
<dbReference type="eggNOG" id="KOG4085">
    <property type="taxonomic scope" value="Eukaryota"/>
</dbReference>
<dbReference type="GeneTree" id="ENSGT00390000000529"/>
<dbReference type="HOGENOM" id="CLU_108196_2_0_1"/>
<dbReference type="InParanoid" id="Q8BG21"/>
<dbReference type="OMA" id="CIELNTI"/>
<dbReference type="OrthoDB" id="9934994at2759"/>
<dbReference type="PhylomeDB" id="Q8BG21"/>
<dbReference type="TreeFam" id="TF105629"/>
<dbReference type="BioGRID-ORCS" id="381356">
    <property type="hits" value="0 hits in 76 CRISPR screens"/>
</dbReference>
<dbReference type="ChiTaRS" id="Cacfd1">
    <property type="organism name" value="mouse"/>
</dbReference>
<dbReference type="PRO" id="PR:Q8BG21"/>
<dbReference type="Proteomes" id="UP000000589">
    <property type="component" value="Chromosome 2"/>
</dbReference>
<dbReference type="RNAct" id="Q8BG21">
    <property type="molecule type" value="protein"/>
</dbReference>
<dbReference type="Bgee" id="ENSMUSG00000015488">
    <property type="expression patterns" value="Expressed in metanephric mesenchyme and 250 other cell types or tissues"/>
</dbReference>
<dbReference type="ExpressionAtlas" id="Q8BG21">
    <property type="expression patterns" value="baseline and differential"/>
</dbReference>
<dbReference type="GO" id="GO:0005886">
    <property type="term" value="C:plasma membrane"/>
    <property type="evidence" value="ECO:0007669"/>
    <property type="project" value="UniProtKB-SubCell"/>
</dbReference>
<dbReference type="GO" id="GO:0031982">
    <property type="term" value="C:vesicle"/>
    <property type="evidence" value="ECO:0007669"/>
    <property type="project" value="UniProtKB-SubCell"/>
</dbReference>
<dbReference type="InterPro" id="IPR019365">
    <property type="entry name" value="TVP18/Ca-channel_flower"/>
</dbReference>
<dbReference type="PANTHER" id="PTHR13314">
    <property type="entry name" value="CALCIUM CHANNEL FLOWER HOMOLOG"/>
    <property type="match status" value="1"/>
</dbReference>
<dbReference type="PANTHER" id="PTHR13314:SF2">
    <property type="entry name" value="CALCIUM CHANNEL FLOWER HOMOLOG"/>
    <property type="match status" value="1"/>
</dbReference>
<dbReference type="Pfam" id="PF10233">
    <property type="entry name" value="Cg6151-P"/>
    <property type="match status" value="1"/>
</dbReference>
<dbReference type="SMART" id="SM01077">
    <property type="entry name" value="Cg6151-P"/>
    <property type="match status" value="1"/>
</dbReference>
<sequence>MSGSGAAGAAAGPAPPAQEEGMTWWYRWLCRLAGVLGAVSCAISGLFNCVTIHPLNIAAGVWMIMNAFILLLCEAPFCCQFVEFANTVAEKVDRLRSWQKAVFYCGMAIVPIVMSLTLTTLLGNAIAFATGVLYGLSALGKKGDAISYARIQQQRQQADEEKLAETFEGEL</sequence>
<keyword id="KW-0025">Alternative splicing</keyword>
<keyword id="KW-1003">Cell membrane</keyword>
<keyword id="KW-0472">Membrane</keyword>
<keyword id="KW-1185">Reference proteome</keyword>
<keyword id="KW-0812">Transmembrane</keyword>
<keyword id="KW-1133">Transmembrane helix</keyword>
<reference key="1">
    <citation type="journal article" date="2005" name="Science">
        <title>The transcriptional landscape of the mammalian genome.</title>
        <authorList>
            <person name="Carninci P."/>
            <person name="Kasukawa T."/>
            <person name="Katayama S."/>
            <person name="Gough J."/>
            <person name="Frith M.C."/>
            <person name="Maeda N."/>
            <person name="Oyama R."/>
            <person name="Ravasi T."/>
            <person name="Lenhard B."/>
            <person name="Wells C."/>
            <person name="Kodzius R."/>
            <person name="Shimokawa K."/>
            <person name="Bajic V.B."/>
            <person name="Brenner S.E."/>
            <person name="Batalov S."/>
            <person name="Forrest A.R."/>
            <person name="Zavolan M."/>
            <person name="Davis M.J."/>
            <person name="Wilming L.G."/>
            <person name="Aidinis V."/>
            <person name="Allen J.E."/>
            <person name="Ambesi-Impiombato A."/>
            <person name="Apweiler R."/>
            <person name="Aturaliya R.N."/>
            <person name="Bailey T.L."/>
            <person name="Bansal M."/>
            <person name="Baxter L."/>
            <person name="Beisel K.W."/>
            <person name="Bersano T."/>
            <person name="Bono H."/>
            <person name="Chalk A.M."/>
            <person name="Chiu K.P."/>
            <person name="Choudhary V."/>
            <person name="Christoffels A."/>
            <person name="Clutterbuck D.R."/>
            <person name="Crowe M.L."/>
            <person name="Dalla E."/>
            <person name="Dalrymple B.P."/>
            <person name="de Bono B."/>
            <person name="Della Gatta G."/>
            <person name="di Bernardo D."/>
            <person name="Down T."/>
            <person name="Engstrom P."/>
            <person name="Fagiolini M."/>
            <person name="Faulkner G."/>
            <person name="Fletcher C.F."/>
            <person name="Fukushima T."/>
            <person name="Furuno M."/>
            <person name="Futaki S."/>
            <person name="Gariboldi M."/>
            <person name="Georgii-Hemming P."/>
            <person name="Gingeras T.R."/>
            <person name="Gojobori T."/>
            <person name="Green R.E."/>
            <person name="Gustincich S."/>
            <person name="Harbers M."/>
            <person name="Hayashi Y."/>
            <person name="Hensch T.K."/>
            <person name="Hirokawa N."/>
            <person name="Hill D."/>
            <person name="Huminiecki L."/>
            <person name="Iacono M."/>
            <person name="Ikeo K."/>
            <person name="Iwama A."/>
            <person name="Ishikawa T."/>
            <person name="Jakt M."/>
            <person name="Kanapin A."/>
            <person name="Katoh M."/>
            <person name="Kawasawa Y."/>
            <person name="Kelso J."/>
            <person name="Kitamura H."/>
            <person name="Kitano H."/>
            <person name="Kollias G."/>
            <person name="Krishnan S.P."/>
            <person name="Kruger A."/>
            <person name="Kummerfeld S.K."/>
            <person name="Kurochkin I.V."/>
            <person name="Lareau L.F."/>
            <person name="Lazarevic D."/>
            <person name="Lipovich L."/>
            <person name="Liu J."/>
            <person name="Liuni S."/>
            <person name="McWilliam S."/>
            <person name="Madan Babu M."/>
            <person name="Madera M."/>
            <person name="Marchionni L."/>
            <person name="Matsuda H."/>
            <person name="Matsuzawa S."/>
            <person name="Miki H."/>
            <person name="Mignone F."/>
            <person name="Miyake S."/>
            <person name="Morris K."/>
            <person name="Mottagui-Tabar S."/>
            <person name="Mulder N."/>
            <person name="Nakano N."/>
            <person name="Nakauchi H."/>
            <person name="Ng P."/>
            <person name="Nilsson R."/>
            <person name="Nishiguchi S."/>
            <person name="Nishikawa S."/>
            <person name="Nori F."/>
            <person name="Ohara O."/>
            <person name="Okazaki Y."/>
            <person name="Orlando V."/>
            <person name="Pang K.C."/>
            <person name="Pavan W.J."/>
            <person name="Pavesi G."/>
            <person name="Pesole G."/>
            <person name="Petrovsky N."/>
            <person name="Piazza S."/>
            <person name="Reed J."/>
            <person name="Reid J.F."/>
            <person name="Ring B.Z."/>
            <person name="Ringwald M."/>
            <person name="Rost B."/>
            <person name="Ruan Y."/>
            <person name="Salzberg S.L."/>
            <person name="Sandelin A."/>
            <person name="Schneider C."/>
            <person name="Schoenbach C."/>
            <person name="Sekiguchi K."/>
            <person name="Semple C.A."/>
            <person name="Seno S."/>
            <person name="Sessa L."/>
            <person name="Sheng Y."/>
            <person name="Shibata Y."/>
            <person name="Shimada H."/>
            <person name="Shimada K."/>
            <person name="Silva D."/>
            <person name="Sinclair B."/>
            <person name="Sperling S."/>
            <person name="Stupka E."/>
            <person name="Sugiura K."/>
            <person name="Sultana R."/>
            <person name="Takenaka Y."/>
            <person name="Taki K."/>
            <person name="Tammoja K."/>
            <person name="Tan S.L."/>
            <person name="Tang S."/>
            <person name="Taylor M.S."/>
            <person name="Tegner J."/>
            <person name="Teichmann S.A."/>
            <person name="Ueda H.R."/>
            <person name="van Nimwegen E."/>
            <person name="Verardo R."/>
            <person name="Wei C.L."/>
            <person name="Yagi K."/>
            <person name="Yamanishi H."/>
            <person name="Zabarovsky E."/>
            <person name="Zhu S."/>
            <person name="Zimmer A."/>
            <person name="Hide W."/>
            <person name="Bult C."/>
            <person name="Grimmond S.M."/>
            <person name="Teasdale R.D."/>
            <person name="Liu E.T."/>
            <person name="Brusic V."/>
            <person name="Quackenbush J."/>
            <person name="Wahlestedt C."/>
            <person name="Mattick J.S."/>
            <person name="Hume D.A."/>
            <person name="Kai C."/>
            <person name="Sasaki D."/>
            <person name="Tomaru Y."/>
            <person name="Fukuda S."/>
            <person name="Kanamori-Katayama M."/>
            <person name="Suzuki M."/>
            <person name="Aoki J."/>
            <person name="Arakawa T."/>
            <person name="Iida J."/>
            <person name="Imamura K."/>
            <person name="Itoh M."/>
            <person name="Kato T."/>
            <person name="Kawaji H."/>
            <person name="Kawagashira N."/>
            <person name="Kawashima T."/>
            <person name="Kojima M."/>
            <person name="Kondo S."/>
            <person name="Konno H."/>
            <person name="Nakano K."/>
            <person name="Ninomiya N."/>
            <person name="Nishio T."/>
            <person name="Okada M."/>
            <person name="Plessy C."/>
            <person name="Shibata K."/>
            <person name="Shiraki T."/>
            <person name="Suzuki S."/>
            <person name="Tagami M."/>
            <person name="Waki K."/>
            <person name="Watahiki A."/>
            <person name="Okamura-Oho Y."/>
            <person name="Suzuki H."/>
            <person name="Kawai J."/>
            <person name="Hayashizaki Y."/>
        </authorList>
    </citation>
    <scope>NUCLEOTIDE SEQUENCE [LARGE SCALE MRNA] (ISOFORMS 1; 2 AND 3)</scope>
    <source>
        <strain>C57BL/6J</strain>
        <tissue>Stomach</tissue>
        <tissue>Thymus</tissue>
    </source>
</reference>
<reference key="2">
    <citation type="journal article" date="2009" name="PLoS Biol.">
        <title>Lineage-specific biology revealed by a finished genome assembly of the mouse.</title>
        <authorList>
            <person name="Church D.M."/>
            <person name="Goodstadt L."/>
            <person name="Hillier L.W."/>
            <person name="Zody M.C."/>
            <person name="Goldstein S."/>
            <person name="She X."/>
            <person name="Bult C.J."/>
            <person name="Agarwala R."/>
            <person name="Cherry J.L."/>
            <person name="DiCuccio M."/>
            <person name="Hlavina W."/>
            <person name="Kapustin Y."/>
            <person name="Meric P."/>
            <person name="Maglott D."/>
            <person name="Birtle Z."/>
            <person name="Marques A.C."/>
            <person name="Graves T."/>
            <person name="Zhou S."/>
            <person name="Teague B."/>
            <person name="Potamousis K."/>
            <person name="Churas C."/>
            <person name="Place M."/>
            <person name="Herschleb J."/>
            <person name="Runnheim R."/>
            <person name="Forrest D."/>
            <person name="Amos-Landgraf J."/>
            <person name="Schwartz D.C."/>
            <person name="Cheng Z."/>
            <person name="Lindblad-Toh K."/>
            <person name="Eichler E.E."/>
            <person name="Ponting C.P."/>
        </authorList>
    </citation>
    <scope>NUCLEOTIDE SEQUENCE [LARGE SCALE GENOMIC DNA] (ISOFORMS 1; 2; 3 AND 4)</scope>
    <source>
        <strain>C57BL/6J</strain>
    </source>
</reference>
<reference key="3">
    <citation type="journal article" date="2010" name="Cell">
        <title>A tissue-specific atlas of mouse protein phosphorylation and expression.</title>
        <authorList>
            <person name="Huttlin E.L."/>
            <person name="Jedrychowski M.P."/>
            <person name="Elias J.E."/>
            <person name="Goswami T."/>
            <person name="Rad R."/>
            <person name="Beausoleil S.A."/>
            <person name="Villen J."/>
            <person name="Haas W."/>
            <person name="Sowa M.E."/>
            <person name="Gygi S.P."/>
        </authorList>
    </citation>
    <scope>IDENTIFICATION BY MASS SPECTROMETRY [LARGE SCALE ANALYSIS]</scope>
    <source>
        <tissue>Liver</tissue>
    </source>
</reference>
<reference key="4">
    <citation type="journal article" date="2012" name="Dis. Model. Mech.">
        <title>Flower-deficient mice have reduced susceptibility to skin papilloma formation.</title>
        <authorList>
            <person name="Petrova E."/>
            <person name="Lopez-Gay J.M."/>
            <person name="Rhiner C."/>
            <person name="Moreno E."/>
        </authorList>
    </citation>
    <scope>FUNCTION</scope>
    <scope>TISSUE SPECIFICITY (ISOFORMS 1; 2; 3 AND 4)</scope>
    <scope>DISRUPTION PHENOTYPE</scope>
</reference>
<reference key="5">
    <citation type="journal article" date="2017" name="PLoS Biol.">
        <title>A Ca2+ channel differentially regulates Clathrin-mediated and activity-dependent bulk endocytosis.</title>
        <authorList>
            <person name="Yao C.K."/>
            <person name="Liu Y.T."/>
            <person name="Lee I.C."/>
            <person name="Wang Y.T."/>
            <person name="Wu P.Y."/>
        </authorList>
    </citation>
    <scope>TISSUE SPECIFICITY</scope>
    <scope>DEVELOPMENTAL STAGE</scope>
</reference>
<reference key="6">
    <citation type="journal article" date="2018" name="J. Cell Biol.">
        <title>Cytotoxic granule endocytosis depends on the Flower protein.</title>
        <authorList>
            <person name="Chang H.F."/>
            <person name="Mannebach S."/>
            <person name="Beck A."/>
            <person name="Ravichandran K."/>
            <person name="Krause E."/>
            <person name="Frohnweiler K."/>
            <person name="Fecher-Trost C."/>
            <person name="Schirra C."/>
            <person name="Pattu V."/>
            <person name="Flockerzi V."/>
            <person name="Rettig J."/>
        </authorList>
    </citation>
    <scope>FUNCTION</scope>
    <scope>INTERACTION WITH THE ADAPTOR PROTEIN COMPLEX 2 (AP-2)</scope>
    <scope>INDUCTION BY IMMUNO RESPONSE</scope>
    <scope>TISSUE SPECIFICITY</scope>
    <scope>DISRUPTION PHENOTYPE</scope>
    <scope>MUTAGENESIS OF 26-TYR--LEU-29 AND 148-TYR--ILE-151</scope>
</reference>
<organism>
    <name type="scientific">Mus musculus</name>
    <name type="common">Mouse</name>
    <dbReference type="NCBI Taxonomy" id="10090"/>
    <lineage>
        <taxon>Eukaryota</taxon>
        <taxon>Metazoa</taxon>
        <taxon>Chordata</taxon>
        <taxon>Craniata</taxon>
        <taxon>Vertebrata</taxon>
        <taxon>Euteleostomi</taxon>
        <taxon>Mammalia</taxon>
        <taxon>Eutheria</taxon>
        <taxon>Euarchontoglires</taxon>
        <taxon>Glires</taxon>
        <taxon>Rodentia</taxon>
        <taxon>Myomorpha</taxon>
        <taxon>Muroidea</taxon>
        <taxon>Muridae</taxon>
        <taxon>Murinae</taxon>
        <taxon>Mus</taxon>
        <taxon>Mus</taxon>
    </lineage>
</organism>
<protein>
    <recommendedName>
        <fullName>Calcium channel flower homolog</fullName>
    </recommendedName>
    <alternativeName>
        <fullName>Calcium channel flower domain-containing protein 1</fullName>
    </alternativeName>
</protein>
<evidence type="ECO:0000250" key="1">
    <source>
        <dbReference type="UniProtKB" id="D4A9I3"/>
    </source>
</evidence>
<evidence type="ECO:0000255" key="2"/>
<evidence type="ECO:0000269" key="3">
    <source>
    </source>
</evidence>
<evidence type="ECO:0000269" key="4">
    <source>
    </source>
</evidence>
<evidence type="ECO:0000269" key="5">
    <source>
    </source>
</evidence>
<evidence type="ECO:0000303" key="6">
    <source>
    </source>
</evidence>
<evidence type="ECO:0000303" key="7">
    <source>
    </source>
</evidence>
<evidence type="ECO:0000305" key="8"/>
<evidence type="ECO:0000305" key="9">
    <source>
    </source>
</evidence>
<comment type="function">
    <text evidence="1 3 5">Transmembrane protein which mediates synaptic endocytosis and fitness-based cell culling (PubMed:22362363, PubMed:29288152). In response to different stimulus strengths, controls two major modes of synaptic vesicle (SV) retrieval in hippocampal neurons; Clathrin-mediated endocytosis (CME) in response to mild stimulation and activity-dependent bulk endocytosis (ADBE) in response to strong stimulation (By similarity). In cytotoxic T-lymphoocytes (CTLs) facilitates calcium-dependent endocytosis of cytotoxic granules (CGs) at the immuno synapse (PubMed:29288152). Different isoforms work as fitness fingerprints in 'loser' and 'winner' cells and thereby mediate win/lose decisions as part of the cell competition process (PubMed:22362363).</text>
</comment>
<comment type="subunit">
    <text evidence="5">Interacts with adaptor protein complex 2 (AP-2).</text>
</comment>
<comment type="subcellular location">
    <subcellularLocation>
        <location evidence="5">Cell membrane</location>
        <topology evidence="8">Multi-pass membrane protein</topology>
    </subcellularLocation>
    <subcellularLocation>
        <location evidence="5">Vesicle</location>
    </subcellularLocation>
    <text evidence="1 5">In cytotoxic T-lymphoocytes, localizes to intracellular vesicles that move to the immuno synapse (PubMed:29288152). Enriched in synaptic vesicles at the presynpatic vesicles (By similarity). Detected in the Golgi apparatus of cultured hippocampal neurons (By similarity).</text>
</comment>
<comment type="alternative products">
    <event type="alternative splicing"/>
    <isoform>
        <id>Q8BG21-1</id>
        <name>1</name>
        <name evidence="7">Fwe2</name>
        <sequence type="displayed"/>
    </isoform>
    <isoform>
        <id>Q8BG21-2</id>
        <name>2</name>
        <name evidence="7">Fwe3</name>
        <sequence type="described" ref="VSP_012998 VSP_012999"/>
    </isoform>
    <isoform>
        <id>Q8BG21-3</id>
        <name>3</name>
        <name evidence="7">Fwe1</name>
        <sequence type="described" ref="VSP_013000"/>
    </isoform>
    <isoform>
        <id>Q8BG21-4</id>
        <name>4</name>
        <name evidence="7">Fwe4</name>
        <sequence type="described" ref="VSP_062136"/>
    </isoform>
</comment>
<comment type="tissue specificity">
    <text evidence="4 5">Expressed in neurons in the brain (at protein level) (PubMed:29288152). Expressed in neuroblastoma cell lines (at protein level) (PubMed:28414717). Expressed in cytotoxic T-lymphoocytes (at protein level) (PubMed:29288152).</text>
</comment>
<comment type="tissue specificity">
    <molecule>Isoform 1</molecule>
    <text evidence="3">Low levels of expression in various tissues including the brain, eye, heart, liver and colon (PubMed:22362363). Expression in the heart is at slightly higher levels than isoform 3 (PubMed:22362363). Expressed in skin cells (PubMed:22362363).</text>
</comment>
<comment type="tissue specificity">
    <molecule>Isoform 2</molecule>
    <text evidence="3">Very low levels of expression in the brain, liver and eye (PubMed:22362363). Detected at very low levels of expression in skin cells (PubMed:22362363).</text>
</comment>
<comment type="tissue specificity">
    <molecule>Isoform 3</molecule>
    <text evidence="3">Expressed in various tissues, with highest levels of expression in the brain and eye (PubMed:22362363). Expressed in skin cells (PubMed:22362363). Low levels of expression in the liver, colon, heart and spleen (PubMed:22362363).</text>
</comment>
<comment type="tissue specificity">
    <molecule>Isoform 4</molecule>
    <text evidence="3">Barely detected in the brain and liver.</text>
</comment>
<comment type="developmental stage">
    <text evidence="4">Expressed in postnatal and adult brain (at protein level).</text>
</comment>
<comment type="induction">
    <text evidence="5">Increased expression in stimulated cytotoxic T-lymphoocytes.</text>
</comment>
<comment type="disruption phenotype">
    <text evidence="3 5">Viable and fertile (PubMed:22362363). Results in lowered susceptibility to skin papillomas induced by 7,12-dimethylbenzanthracene (DMBA) and 12-O-tetradecanoylphorbol-13-acetate (TPA) (PubMed:22362363). In cytotoxic T-lymphoocytes, leads to a complete block of early cytotoxic granules (CG) endocytosis at the immuno synapse thereby impairing serial killing of target cells (PubMed:29288152). Does not affect cytotoxic granules exocytosis and global calcium signaling, however increases latency of CG fusion and endosome recycling (PubMed:29288152).</text>
</comment>
<comment type="miscellaneous">
    <text evidence="3">In chemically-induced skin papilloma, isoforms 1 and 3 are up-regulated in the papilloma cells and papilloma-surrounding skin, suggesting they might be important for papilloma growth.</text>
</comment>
<comment type="similarity">
    <text evidence="8">Belongs to the calcium channel flower family.</text>
</comment>
<name>FLOWR_MOUSE</name>
<feature type="chain" id="PRO_0000089672" description="Calcium channel flower homolog">
    <location>
        <begin position="1"/>
        <end position="171"/>
    </location>
</feature>
<feature type="topological domain" description="Cytoplasmic" evidence="9">
    <location>
        <begin position="1"/>
        <end position="31"/>
    </location>
</feature>
<feature type="transmembrane region" description="Helical" evidence="2">
    <location>
        <begin position="32"/>
        <end position="52"/>
    </location>
</feature>
<feature type="topological domain" description="Extracellular" evidence="9">
    <location>
        <begin position="53"/>
        <end position="56"/>
    </location>
</feature>
<feature type="transmembrane region" description="Helical" evidence="2">
    <location>
        <begin position="57"/>
        <end position="77"/>
    </location>
</feature>
<feature type="topological domain" description="Cytoplasmic" evidence="9">
    <location>
        <begin position="78"/>
        <end position="101"/>
    </location>
</feature>
<feature type="transmembrane region" description="Helical" evidence="2">
    <location>
        <begin position="102"/>
        <end position="122"/>
    </location>
</feature>
<feature type="topological domain" description="Extracellular" evidence="9">
    <location>
        <begin position="123"/>
        <end position="124"/>
    </location>
</feature>
<feature type="transmembrane region" description="Helical" evidence="2">
    <location>
        <begin position="125"/>
        <end position="141"/>
    </location>
</feature>
<feature type="topological domain" description="Cytoplasmic" evidence="9">
    <location>
        <begin position="142"/>
        <end position="171"/>
    </location>
</feature>
<feature type="splice variant" id="VSP_062136" description="In isoform 4.">
    <location>
        <begin position="1"/>
        <end position="62"/>
    </location>
</feature>
<feature type="splice variant" id="VSP_013000" description="In isoform 3." evidence="6">
    <location>
        <begin position="107"/>
        <end position="171"/>
    </location>
</feature>
<feature type="splice variant" id="VSP_012998" description="In isoform 2." evidence="6">
    <original>MAIVPIVMSLTLTTLLGNAIAF</original>
    <variation>HGEALRGAWPDVRLPNRNTISL</variation>
    <location>
        <begin position="107"/>
        <end position="128"/>
    </location>
</feature>
<feature type="splice variant" id="VSP_012999" description="In isoform 2." evidence="6">
    <location>
        <begin position="129"/>
        <end position="171"/>
    </location>
</feature>
<feature type="mutagenesis site" description="Reduces binding to AP-2 complexes and increases localization to plasma membrane; when associated with 148-A--A-151." evidence="5">
    <original>YRWL</original>
    <variation>AAAA</variation>
    <location>
        <begin position="26"/>
        <end position="29"/>
    </location>
</feature>
<feature type="mutagenesis site" description="Reduces binding to AP-2 complexes and increases localization to plasma membrane; when associated with 26-A--A-29." evidence="5">
    <original>YARI</original>
    <variation>AAAA</variation>
    <location>
        <begin position="148"/>
        <end position="151"/>
    </location>
</feature>
<proteinExistence type="evidence at protein level"/>
<accession>Q8BG21</accession>
<accession>A2AR22</accession>
<accession>A2AR23</accession>
<accession>A6PWX1</accession>
<accession>Q8C9W0</accession>
<accession>Q8CC30</accession>
<accession>Q9CX69</accession>
<gene>
    <name type="primary">Cacfd1</name>
</gene>